<gene>
    <name evidence="1" type="primary">dapE</name>
    <name type="ordered locus">H16_A2069</name>
</gene>
<name>DAPE_CUPNH</name>
<proteinExistence type="inferred from homology"/>
<evidence type="ECO:0000255" key="1">
    <source>
        <dbReference type="HAMAP-Rule" id="MF_01690"/>
    </source>
</evidence>
<keyword id="KW-0028">Amino-acid biosynthesis</keyword>
<keyword id="KW-0170">Cobalt</keyword>
<keyword id="KW-0220">Diaminopimelate biosynthesis</keyword>
<keyword id="KW-0378">Hydrolase</keyword>
<keyword id="KW-0457">Lysine biosynthesis</keyword>
<keyword id="KW-0479">Metal-binding</keyword>
<keyword id="KW-1185">Reference proteome</keyword>
<keyword id="KW-0862">Zinc</keyword>
<comment type="function">
    <text evidence="1">Catalyzes the hydrolysis of N-succinyl-L,L-diaminopimelic acid (SDAP), forming succinate and LL-2,6-diaminopimelate (DAP), an intermediate involved in the bacterial biosynthesis of lysine and meso-diaminopimelic acid, an essential component of bacterial cell walls.</text>
</comment>
<comment type="catalytic activity">
    <reaction evidence="1">
        <text>N-succinyl-(2S,6S)-2,6-diaminopimelate + H2O = (2S,6S)-2,6-diaminopimelate + succinate</text>
        <dbReference type="Rhea" id="RHEA:22608"/>
        <dbReference type="ChEBI" id="CHEBI:15377"/>
        <dbReference type="ChEBI" id="CHEBI:30031"/>
        <dbReference type="ChEBI" id="CHEBI:57609"/>
        <dbReference type="ChEBI" id="CHEBI:58087"/>
        <dbReference type="EC" id="3.5.1.18"/>
    </reaction>
</comment>
<comment type="cofactor">
    <cofactor evidence="1">
        <name>Zn(2+)</name>
        <dbReference type="ChEBI" id="CHEBI:29105"/>
    </cofactor>
    <cofactor evidence="1">
        <name>Co(2+)</name>
        <dbReference type="ChEBI" id="CHEBI:48828"/>
    </cofactor>
    <text evidence="1">Binds 2 Zn(2+) or Co(2+) ions per subunit.</text>
</comment>
<comment type="pathway">
    <text evidence="1">Amino-acid biosynthesis; L-lysine biosynthesis via DAP pathway; LL-2,6-diaminopimelate from (S)-tetrahydrodipicolinate (succinylase route): step 3/3.</text>
</comment>
<comment type="subunit">
    <text evidence="1">Homodimer.</text>
</comment>
<comment type="similarity">
    <text evidence="1">Belongs to the peptidase M20A family. DapE subfamily.</text>
</comment>
<feature type="chain" id="PRO_0000375674" description="Succinyl-diaminopimelate desuccinylase">
    <location>
        <begin position="1"/>
        <end position="383"/>
    </location>
</feature>
<feature type="active site" evidence="1">
    <location>
        <position position="76"/>
    </location>
</feature>
<feature type="active site" description="Proton acceptor" evidence="1">
    <location>
        <position position="141"/>
    </location>
</feature>
<feature type="binding site" evidence="1">
    <location>
        <position position="74"/>
    </location>
    <ligand>
        <name>Zn(2+)</name>
        <dbReference type="ChEBI" id="CHEBI:29105"/>
        <label>1</label>
    </ligand>
</feature>
<feature type="binding site" evidence="1">
    <location>
        <position position="107"/>
    </location>
    <ligand>
        <name>Zn(2+)</name>
        <dbReference type="ChEBI" id="CHEBI:29105"/>
        <label>1</label>
    </ligand>
</feature>
<feature type="binding site" evidence="1">
    <location>
        <position position="107"/>
    </location>
    <ligand>
        <name>Zn(2+)</name>
        <dbReference type="ChEBI" id="CHEBI:29105"/>
        <label>2</label>
    </ligand>
</feature>
<feature type="binding site" evidence="1">
    <location>
        <position position="142"/>
    </location>
    <ligand>
        <name>Zn(2+)</name>
        <dbReference type="ChEBI" id="CHEBI:29105"/>
        <label>2</label>
    </ligand>
</feature>
<feature type="binding site" evidence="1">
    <location>
        <position position="170"/>
    </location>
    <ligand>
        <name>Zn(2+)</name>
        <dbReference type="ChEBI" id="CHEBI:29105"/>
        <label>1</label>
    </ligand>
</feature>
<feature type="binding site" evidence="1">
    <location>
        <position position="356"/>
    </location>
    <ligand>
        <name>Zn(2+)</name>
        <dbReference type="ChEBI" id="CHEBI:29105"/>
        <label>2</label>
    </ligand>
</feature>
<sequence>MTATLALTEDLIRRRSVTPADEGCQAILETRLKALGFDCEALVSGPDDFRVTNLWAVRRGTQGKDGKLLVFAGHTDVVPTGPLEQWHSDPFAPTHRDGKLYGRGAADMKTSIAGFVVAVEEFVKAHPAHAGSIAFLITSDEEGPAHDGTIKVVEALSARGERLDYCVIGEPTSVDTLGDMVKNGRRGSLSGKLTVKGIQCHIAYPHLGRNPIHEAAPALAELAAEVWDQGNEYFPPTSWQMSNIHGGTGATNVIPGHVTIDFNFRFSTASTPEGLKARVHAILDRHQLEYALDWTLGGEPFLTPRGELSDALSSAIEAETGVKTELSTTGGTSDGRFIAKICPQVIEFGPPNASIHKIDEHVEVRFIEPLKNVYRGVLERLVA</sequence>
<protein>
    <recommendedName>
        <fullName evidence="1">Succinyl-diaminopimelate desuccinylase</fullName>
        <shortName evidence="1">SDAP desuccinylase</shortName>
        <ecNumber evidence="1">3.5.1.18</ecNumber>
    </recommendedName>
    <alternativeName>
        <fullName evidence="1">N-succinyl-LL-2,6-diaminoheptanedioate amidohydrolase</fullName>
    </alternativeName>
</protein>
<accession>Q0KA02</accession>
<organism>
    <name type="scientific">Cupriavidus necator (strain ATCC 17699 / DSM 428 / KCTC 22496 / NCIMB 10442 / H16 / Stanier 337)</name>
    <name type="common">Ralstonia eutropha</name>
    <dbReference type="NCBI Taxonomy" id="381666"/>
    <lineage>
        <taxon>Bacteria</taxon>
        <taxon>Pseudomonadati</taxon>
        <taxon>Pseudomonadota</taxon>
        <taxon>Betaproteobacteria</taxon>
        <taxon>Burkholderiales</taxon>
        <taxon>Burkholderiaceae</taxon>
        <taxon>Cupriavidus</taxon>
    </lineage>
</organism>
<reference key="1">
    <citation type="journal article" date="2006" name="Nat. Biotechnol.">
        <title>Genome sequence of the bioplastic-producing 'Knallgas' bacterium Ralstonia eutropha H16.</title>
        <authorList>
            <person name="Pohlmann A."/>
            <person name="Fricke W.F."/>
            <person name="Reinecke F."/>
            <person name="Kusian B."/>
            <person name="Liesegang H."/>
            <person name="Cramm R."/>
            <person name="Eitinger T."/>
            <person name="Ewering C."/>
            <person name="Poetter M."/>
            <person name="Schwartz E."/>
            <person name="Strittmatter A."/>
            <person name="Voss I."/>
            <person name="Gottschalk G."/>
            <person name="Steinbuechel A."/>
            <person name="Friedrich B."/>
            <person name="Bowien B."/>
        </authorList>
    </citation>
    <scope>NUCLEOTIDE SEQUENCE [LARGE SCALE GENOMIC DNA]</scope>
    <source>
        <strain>ATCC 17699 / DSM 428 / KCTC 22496 / NCIMB 10442 / H16 / Stanier 337</strain>
    </source>
</reference>
<dbReference type="EC" id="3.5.1.18" evidence="1"/>
<dbReference type="EMBL" id="AM260479">
    <property type="protein sequence ID" value="CAJ93169.1"/>
    <property type="molecule type" value="Genomic_DNA"/>
</dbReference>
<dbReference type="RefSeq" id="WP_011615477.1">
    <property type="nucleotide sequence ID" value="NC_008313.1"/>
</dbReference>
<dbReference type="SMR" id="Q0KA02"/>
<dbReference type="STRING" id="381666.H16_A2069"/>
<dbReference type="KEGG" id="reh:H16_A2069"/>
<dbReference type="PATRIC" id="fig|381666.6.peg.2478"/>
<dbReference type="eggNOG" id="COG0624">
    <property type="taxonomic scope" value="Bacteria"/>
</dbReference>
<dbReference type="HOGENOM" id="CLU_021802_4_0_4"/>
<dbReference type="OrthoDB" id="9809784at2"/>
<dbReference type="UniPathway" id="UPA00034">
    <property type="reaction ID" value="UER00021"/>
</dbReference>
<dbReference type="Proteomes" id="UP000008210">
    <property type="component" value="Chromosome 1"/>
</dbReference>
<dbReference type="GO" id="GO:0008777">
    <property type="term" value="F:acetylornithine deacetylase activity"/>
    <property type="evidence" value="ECO:0007669"/>
    <property type="project" value="TreeGrafter"/>
</dbReference>
<dbReference type="GO" id="GO:0050897">
    <property type="term" value="F:cobalt ion binding"/>
    <property type="evidence" value="ECO:0007669"/>
    <property type="project" value="UniProtKB-UniRule"/>
</dbReference>
<dbReference type="GO" id="GO:0009014">
    <property type="term" value="F:succinyl-diaminopimelate desuccinylase activity"/>
    <property type="evidence" value="ECO:0007669"/>
    <property type="project" value="UniProtKB-UniRule"/>
</dbReference>
<dbReference type="GO" id="GO:0008270">
    <property type="term" value="F:zinc ion binding"/>
    <property type="evidence" value="ECO:0007669"/>
    <property type="project" value="UniProtKB-UniRule"/>
</dbReference>
<dbReference type="GO" id="GO:0019877">
    <property type="term" value="P:diaminopimelate biosynthetic process"/>
    <property type="evidence" value="ECO:0007669"/>
    <property type="project" value="UniProtKB-UniRule"/>
</dbReference>
<dbReference type="GO" id="GO:0006526">
    <property type="term" value="P:L-arginine biosynthetic process"/>
    <property type="evidence" value="ECO:0007669"/>
    <property type="project" value="TreeGrafter"/>
</dbReference>
<dbReference type="GO" id="GO:0009089">
    <property type="term" value="P:lysine biosynthetic process via diaminopimelate"/>
    <property type="evidence" value="ECO:0007669"/>
    <property type="project" value="UniProtKB-UniRule"/>
</dbReference>
<dbReference type="CDD" id="cd03891">
    <property type="entry name" value="M20_DapE_proteobac"/>
    <property type="match status" value="1"/>
</dbReference>
<dbReference type="FunFam" id="3.30.70.360:FF:000011">
    <property type="entry name" value="Succinyl-diaminopimelate desuccinylase"/>
    <property type="match status" value="1"/>
</dbReference>
<dbReference type="FunFam" id="3.40.630.10:FF:000005">
    <property type="entry name" value="Succinyl-diaminopimelate desuccinylase"/>
    <property type="match status" value="1"/>
</dbReference>
<dbReference type="Gene3D" id="3.40.630.10">
    <property type="entry name" value="Zn peptidases"/>
    <property type="match status" value="2"/>
</dbReference>
<dbReference type="HAMAP" id="MF_01690">
    <property type="entry name" value="DapE"/>
    <property type="match status" value="1"/>
</dbReference>
<dbReference type="InterPro" id="IPR036264">
    <property type="entry name" value="Bact_exopeptidase_dim_dom"/>
</dbReference>
<dbReference type="InterPro" id="IPR005941">
    <property type="entry name" value="DapE_proteobac"/>
</dbReference>
<dbReference type="InterPro" id="IPR002933">
    <property type="entry name" value="Peptidase_M20"/>
</dbReference>
<dbReference type="InterPro" id="IPR011650">
    <property type="entry name" value="Peptidase_M20_dimer"/>
</dbReference>
<dbReference type="InterPro" id="IPR050072">
    <property type="entry name" value="Peptidase_M20A"/>
</dbReference>
<dbReference type="NCBIfam" id="TIGR01246">
    <property type="entry name" value="dapE_proteo"/>
    <property type="match status" value="1"/>
</dbReference>
<dbReference type="NCBIfam" id="NF009557">
    <property type="entry name" value="PRK13009.1"/>
    <property type="match status" value="1"/>
</dbReference>
<dbReference type="PANTHER" id="PTHR43808">
    <property type="entry name" value="ACETYLORNITHINE DEACETYLASE"/>
    <property type="match status" value="1"/>
</dbReference>
<dbReference type="PANTHER" id="PTHR43808:SF31">
    <property type="entry name" value="N-ACETYL-L-CITRULLINE DEACETYLASE"/>
    <property type="match status" value="1"/>
</dbReference>
<dbReference type="Pfam" id="PF07687">
    <property type="entry name" value="M20_dimer"/>
    <property type="match status" value="1"/>
</dbReference>
<dbReference type="Pfam" id="PF01546">
    <property type="entry name" value="Peptidase_M20"/>
    <property type="match status" value="1"/>
</dbReference>
<dbReference type="SUPFAM" id="SSF55031">
    <property type="entry name" value="Bacterial exopeptidase dimerisation domain"/>
    <property type="match status" value="1"/>
</dbReference>
<dbReference type="SUPFAM" id="SSF53187">
    <property type="entry name" value="Zn-dependent exopeptidases"/>
    <property type="match status" value="1"/>
</dbReference>